<sequence>MGVKITGLDKMQKQLKEVERATEALNGSYDVRFDANDPSSIENAIQEAYSMVDERASGYATNPMVSPLIEHMKENLRQQILDSAEQQRQESGQDGD</sequence>
<dbReference type="EMBL" id="AP001918">
    <property type="protein sequence ID" value="BAA97908.1"/>
    <property type="molecule type" value="Genomic_DNA"/>
</dbReference>
<dbReference type="RefSeq" id="NP_061417.1">
    <property type="nucleotide sequence ID" value="NC_002483.1"/>
</dbReference>
<dbReference type="RefSeq" id="WP_000538310.1">
    <property type="nucleotide sequence ID" value="NZ_JACEFS010000051.1"/>
</dbReference>
<dbReference type="SMR" id="Q9JMR7"/>
<dbReference type="KEGG" id="ecoc:C3026_24300"/>
<reference key="1">
    <citation type="submission" date="2000-04" db="EMBL/GenBank/DDBJ databases">
        <title>Complete nucleotide sequence of the F plasmid: its implications for organization and diversification of plasmid genomes.</title>
        <authorList>
            <person name="Shimizu H."/>
            <person name="Saitoh Y."/>
            <person name="Suda Y."/>
            <person name="Uehara K."/>
            <person name="Sampei G."/>
            <person name="Mizobuchi K."/>
        </authorList>
    </citation>
    <scope>NUCLEOTIDE SEQUENCE [LARGE SCALE GENOMIC DNA]</scope>
    <source>
        <strain>K12 / CR63</strain>
    </source>
</reference>
<protein>
    <recommendedName>
        <fullName>Uncharacterized protein YuaX</fullName>
    </recommendedName>
</protein>
<feature type="chain" id="PRO_0000268027" description="Uncharacterized protein YuaX">
    <location>
        <begin position="1"/>
        <end position="96"/>
    </location>
</feature>
<name>YUAX_ECOLI</name>
<gene>
    <name type="primary">yuaX</name>
    <name type="synonym">yebA</name>
    <name type="ordered locus">ECOK12F038</name>
</gene>
<proteinExistence type="predicted"/>
<accession>Q9JMR7</accession>
<keyword id="KW-0614">Plasmid</keyword>
<geneLocation type="plasmid">
    <name>F</name>
</geneLocation>
<organism>
    <name type="scientific">Escherichia coli (strain K12)</name>
    <dbReference type="NCBI Taxonomy" id="83333"/>
    <lineage>
        <taxon>Bacteria</taxon>
        <taxon>Pseudomonadati</taxon>
        <taxon>Pseudomonadota</taxon>
        <taxon>Gammaproteobacteria</taxon>
        <taxon>Enterobacterales</taxon>
        <taxon>Enterobacteriaceae</taxon>
        <taxon>Escherichia</taxon>
    </lineage>
</organism>